<accession>A2RRX6</accession>
<reference key="1">
    <citation type="submission" date="2007-01" db="EMBL/GenBank/DDBJ databases">
        <authorList>
            <consortium name="NIH - Xenopus Gene Collection (XGC) project"/>
        </authorList>
    </citation>
    <scope>NUCLEOTIDE SEQUENCE [LARGE SCALE MRNA]</scope>
    <source>
        <tissue>Ovary</tissue>
    </source>
</reference>
<sequence length="1356" mass="145668">MLLPSDVARLVLGYLQQEKLSSTCRSFILESPNLREYAEHYTDEGSIPGCVLSLFGKNLTTILNEYIAMKAKENKEEIPVMVSALWKKLDHTLSQIRSMQNCLVLPTSQKVRTRYGIQDLRHQRMLTSHAASTGSAVALQQTSTPIAAKQVMLRSFTSQSASQTIVSPLCSGQSTIQCTNSPATESKGETLQNSALSDAEKKQTSSPMRRKTDCQRRRRAAPLNSSSATHEGETEGNVDSLQDLIDGNFPQLVIENAREKILSNKSLQEKLAENINKFLGSDTATQASKLSEGGALEQYTSIDEILGLQGGEMHMSEEAIHDILEQTELDPDFQELYDLFACSSTKPTKLASRDPSLQTEGVATTSIHVANDNLEPMESSFDASVDTSHSSNHSEVGAAQKKDGRSQLVVPSPTPKVTESTGMPSKVQEMPISASERQSMSDRSVESKKSIDSVIILDNTGSDTVIESNEEVQVTSMEVGISQSQDVDMNVLHTEVIGADCQLAVEQGSLNMLTVDLTVPNLKEETPKMQTYEKASEAKKSSPLKDEVQALGSRRLERNKSEGAEGPCTTESQNIVVLVSIGSTVTESNLLNQRGDLPATPRKTDTSTETTVSEQMQAESSITSKELKVLQKQASKTPPHPMVPPISPSIKGSSSDSDGSSLPLEVSSSVGVSTPVNTSNVEQNCSDVSSVDPSQIITLSFITEDIAEDAELTKAVKSISERSNSALLLSPFHKPQESSSIVSIPGPTSETLTLLADPREVVNVSGDVATGVKPAEDCTIISLPGASNLSTDGGIIQLMPATSSSFAPSGSFFISTCNTGGAQQSNIMVVPSNCAPASTQKQPCHFQTPPRPHSVYTVGQAISPKLSQGSTFILASAVQPVLPGVMGMFPVSVVGQSSNTFTTPSHQVLHVPVSQGVPKLSLPPKSQKPVPPRTLASAAEKQGTAATTDSGNRKSSSRMQRSENVDKNLAAMSQNKPEERQTSTTNPSTKGTENHKRVLCFENTAANRGTPNTKSLCNSAAPQNKDKVETMNTSSSSLPAKQNNKDSGKADKTAPSTEANSKCESVPSKQPVVPATKDLSGDKKPVAVASSPDVLGGVMANKENMLQKENKKQELPEVSKKSSTADGAAGNLERTVQAVHETGRKHATLPSILRRTKLSTERMCPPSPLTKQASDLLQSMQFNSPNAKHFSGGDLPIPRTPGSGIDDRLVDSHQDHMKTPKSKRYPEDGGTPKPMLPPATPELPACSPASETGSENSVNMAAHTLMILSRATLAKTDGSSPLKDNTQQIKLSKNSSKKRKLDEPDEYGRRPHKKELMSPSAILKRKKMKKHRKKSTDDFPAGMDVDKFLMSLHYDE</sequence>
<proteinExistence type="evidence at transcript level"/>
<feature type="chain" id="PRO_0000318165" description="Protein NPAT">
    <location>
        <begin position="1"/>
        <end position="1356"/>
    </location>
</feature>
<feature type="domain" description="LisH" evidence="2">
    <location>
        <begin position="3"/>
        <end position="35"/>
    </location>
</feature>
<feature type="region of interest" description="Disordered" evidence="3">
    <location>
        <begin position="180"/>
        <end position="242"/>
    </location>
</feature>
<feature type="region of interest" description="Disordered" evidence="3">
    <location>
        <begin position="379"/>
        <end position="446"/>
    </location>
</feature>
<feature type="region of interest" description="Disordered" evidence="3">
    <location>
        <begin position="589"/>
        <end position="688"/>
    </location>
</feature>
<feature type="region of interest" description="Disordered" evidence="3">
    <location>
        <begin position="916"/>
        <end position="1092"/>
    </location>
</feature>
<feature type="region of interest" description="Disordered" evidence="3">
    <location>
        <begin position="1107"/>
        <end position="1130"/>
    </location>
</feature>
<feature type="region of interest" description="Disordered" evidence="3">
    <location>
        <begin position="1180"/>
        <end position="1258"/>
    </location>
</feature>
<feature type="region of interest" description="Disordered" evidence="3">
    <location>
        <begin position="1276"/>
        <end position="1342"/>
    </location>
</feature>
<feature type="compositionally biased region" description="Polar residues" evidence="3">
    <location>
        <begin position="180"/>
        <end position="196"/>
    </location>
</feature>
<feature type="compositionally biased region" description="Polar residues" evidence="3">
    <location>
        <begin position="381"/>
        <end position="394"/>
    </location>
</feature>
<feature type="compositionally biased region" description="Polar residues" evidence="3">
    <location>
        <begin position="607"/>
        <end position="624"/>
    </location>
</feature>
<feature type="compositionally biased region" description="Pro residues" evidence="3">
    <location>
        <begin position="638"/>
        <end position="647"/>
    </location>
</feature>
<feature type="compositionally biased region" description="Low complexity" evidence="3">
    <location>
        <begin position="648"/>
        <end position="664"/>
    </location>
</feature>
<feature type="compositionally biased region" description="Polar residues" evidence="3">
    <location>
        <begin position="666"/>
        <end position="688"/>
    </location>
</feature>
<feature type="compositionally biased region" description="Low complexity" evidence="3">
    <location>
        <begin position="917"/>
        <end position="928"/>
    </location>
</feature>
<feature type="compositionally biased region" description="Polar residues" evidence="3">
    <location>
        <begin position="944"/>
        <end position="959"/>
    </location>
</feature>
<feature type="compositionally biased region" description="Polar residues" evidence="3">
    <location>
        <begin position="982"/>
        <end position="991"/>
    </location>
</feature>
<feature type="compositionally biased region" description="Polar residues" evidence="3">
    <location>
        <begin position="1004"/>
        <end position="1022"/>
    </location>
</feature>
<feature type="compositionally biased region" description="Polar residues" evidence="3">
    <location>
        <begin position="1030"/>
        <end position="1042"/>
    </location>
</feature>
<feature type="compositionally biased region" description="Basic and acidic residues" evidence="3">
    <location>
        <begin position="1043"/>
        <end position="1052"/>
    </location>
</feature>
<feature type="compositionally biased region" description="Polar residues" evidence="3">
    <location>
        <begin position="1054"/>
        <end position="1063"/>
    </location>
</feature>
<feature type="compositionally biased region" description="Basic and acidic residues" evidence="3">
    <location>
        <begin position="1107"/>
        <end position="1120"/>
    </location>
</feature>
<feature type="compositionally biased region" description="Basic and acidic residues" evidence="3">
    <location>
        <begin position="1205"/>
        <end position="1218"/>
    </location>
</feature>
<feature type="compositionally biased region" description="Polar residues" evidence="3">
    <location>
        <begin position="1249"/>
        <end position="1258"/>
    </location>
</feature>
<feature type="compositionally biased region" description="Polar residues" evidence="3">
    <location>
        <begin position="1277"/>
        <end position="1289"/>
    </location>
</feature>
<feature type="compositionally biased region" description="Basic and acidic residues" evidence="3">
    <location>
        <begin position="1300"/>
        <end position="1309"/>
    </location>
</feature>
<feature type="compositionally biased region" description="Basic residues" evidence="3">
    <location>
        <begin position="1323"/>
        <end position="1334"/>
    </location>
</feature>
<organism>
    <name type="scientific">Xenopus laevis</name>
    <name type="common">African clawed frog</name>
    <dbReference type="NCBI Taxonomy" id="8355"/>
    <lineage>
        <taxon>Eukaryota</taxon>
        <taxon>Metazoa</taxon>
        <taxon>Chordata</taxon>
        <taxon>Craniata</taxon>
        <taxon>Vertebrata</taxon>
        <taxon>Euteleostomi</taxon>
        <taxon>Amphibia</taxon>
        <taxon>Batrachia</taxon>
        <taxon>Anura</taxon>
        <taxon>Pipoidea</taxon>
        <taxon>Pipidae</taxon>
        <taxon>Xenopodinae</taxon>
        <taxon>Xenopus</taxon>
        <taxon>Xenopus</taxon>
    </lineage>
</organism>
<keyword id="KW-0010">Activator</keyword>
<keyword id="KW-0131">Cell cycle</keyword>
<keyword id="KW-0539">Nucleus</keyword>
<keyword id="KW-1185">Reference proteome</keyword>
<keyword id="KW-0804">Transcription</keyword>
<keyword id="KW-0805">Transcription regulation</keyword>
<evidence type="ECO:0000250" key="1"/>
<evidence type="ECO:0000255" key="2">
    <source>
        <dbReference type="PROSITE-ProRule" id="PRU00126"/>
    </source>
</evidence>
<evidence type="ECO:0000256" key="3">
    <source>
        <dbReference type="SAM" id="MobiDB-lite"/>
    </source>
</evidence>
<evidence type="ECO:0000305" key="4"/>
<dbReference type="EMBL" id="BC131895">
    <property type="protein sequence ID" value="AAI31896.1"/>
    <property type="molecule type" value="mRNA"/>
</dbReference>
<dbReference type="RefSeq" id="NP_001091302.1">
    <property type="nucleotide sequence ID" value="NM_001097833.1"/>
</dbReference>
<dbReference type="SMR" id="A2RRX6"/>
<dbReference type="GeneID" id="100037125"/>
<dbReference type="KEGG" id="xla:100037125"/>
<dbReference type="AGR" id="Xenbase:XB-GENE-6255262"/>
<dbReference type="CTD" id="100037125"/>
<dbReference type="Xenbase" id="XB-GENE-6255262">
    <property type="gene designation" value="npat.S"/>
</dbReference>
<dbReference type="OrthoDB" id="6287635at2759"/>
<dbReference type="Proteomes" id="UP000186698">
    <property type="component" value="Chromosome 2S"/>
</dbReference>
<dbReference type="Bgee" id="100037125">
    <property type="expression patterns" value="Expressed in testis and 19 other cell types or tissues"/>
</dbReference>
<dbReference type="GO" id="GO:0015030">
    <property type="term" value="C:Cajal body"/>
    <property type="evidence" value="ECO:0000250"/>
    <property type="project" value="UniProtKB"/>
</dbReference>
<dbReference type="GO" id="GO:0005737">
    <property type="term" value="C:cytoplasm"/>
    <property type="evidence" value="ECO:0000250"/>
    <property type="project" value="UniProtKB"/>
</dbReference>
<dbReference type="GO" id="GO:0097504">
    <property type="term" value="C:Gemini of Cajal bodies"/>
    <property type="evidence" value="ECO:0000250"/>
    <property type="project" value="UniProtKB"/>
</dbReference>
<dbReference type="GO" id="GO:0005654">
    <property type="term" value="C:nucleoplasm"/>
    <property type="evidence" value="ECO:0000250"/>
    <property type="project" value="UniProtKB"/>
</dbReference>
<dbReference type="GO" id="GO:0005634">
    <property type="term" value="C:nucleus"/>
    <property type="evidence" value="ECO:0000318"/>
    <property type="project" value="GO_Central"/>
</dbReference>
<dbReference type="GO" id="GO:0003712">
    <property type="term" value="F:transcription coregulator activity"/>
    <property type="evidence" value="ECO:0000318"/>
    <property type="project" value="GO_Central"/>
</dbReference>
<dbReference type="InterPro" id="IPR006594">
    <property type="entry name" value="LisH"/>
</dbReference>
<dbReference type="InterPro" id="IPR031442">
    <property type="entry name" value="NPAT_C"/>
</dbReference>
<dbReference type="InterPro" id="IPR052850">
    <property type="entry name" value="NPAT_LisH"/>
</dbReference>
<dbReference type="PANTHER" id="PTHR15087">
    <property type="entry name" value="PROTEIN NPAT"/>
    <property type="match status" value="1"/>
</dbReference>
<dbReference type="PANTHER" id="PTHR15087:SF14">
    <property type="entry name" value="PROTEIN NPAT"/>
    <property type="match status" value="1"/>
</dbReference>
<dbReference type="Pfam" id="PF15712">
    <property type="entry name" value="NPAT_C"/>
    <property type="match status" value="1"/>
</dbReference>
<dbReference type="PROSITE" id="PS50896">
    <property type="entry name" value="LISH"/>
    <property type="match status" value="1"/>
</dbReference>
<comment type="function">
    <text evidence="1">Required for progression through the G1 and S phases of the cell cycle and for S phase entry. Activates transcription of the histone H2A, histone H2B, histone H3 and histone H4 genes (By similarity).</text>
</comment>
<comment type="subcellular location">
    <subcellularLocation>
        <location evidence="1">Nucleus</location>
    </subcellularLocation>
</comment>
<comment type="domain">
    <text evidence="1">The LisH domain is required for the activation of histone gene transcription.</text>
</comment>
<comment type="similarity">
    <text evidence="4">Belongs to the NPAT family.</text>
</comment>
<protein>
    <recommendedName>
        <fullName>Protein NPAT</fullName>
    </recommendedName>
</protein>
<name>NPAT_XENLA</name>
<gene>
    <name type="primary">npat</name>
</gene>